<protein>
    <recommendedName>
        <fullName evidence="1">tRNA dimethylallyltransferase</fullName>
        <ecNumber evidence="1">2.5.1.75</ecNumber>
    </recommendedName>
    <alternativeName>
        <fullName evidence="1">Dimethylallyl diphosphate:tRNA dimethylallyltransferase</fullName>
        <shortName evidence="1">DMAPP:tRNA dimethylallyltransferase</shortName>
        <shortName evidence="1">DMATase</shortName>
    </alternativeName>
    <alternativeName>
        <fullName evidence="1">Isopentenyl-diphosphate:tRNA isopentenyltransferase</fullName>
        <shortName evidence="1">IPP transferase</shortName>
        <shortName evidence="1">IPPT</shortName>
        <shortName evidence="1">IPTase</shortName>
    </alternativeName>
</protein>
<gene>
    <name evidence="1" type="primary">miaA</name>
    <name type="ordered locus">SYNW0094</name>
</gene>
<sequence>MTQPEPLVITLLGPTASGKTALSLEIAERLNLPVINVDSRQLYREMTVGTAKPTAEQRARVPHHLLDLRNPDQPITLQEFQAEAEPCIQRELQSRGMALLVGGSGLYLKALTSGLKPPAVPPQAQLREQLSQLGQAICHPLLQQADPTAGAKIAPADAVRTQRALEVLYATGRPMSSQATATPPPWRVLELGLDPANLRQRIQQRTDQLYSDGLVEETRQLSERYGADLPLLQTIGYGEALQLLEGTMNQAKANRITTQRTRQFAKRQRTWFRRQHQPHWLAPATELDQAMTLIEQHLR</sequence>
<organism>
    <name type="scientific">Parasynechococcus marenigrum (strain WH8102)</name>
    <dbReference type="NCBI Taxonomy" id="84588"/>
    <lineage>
        <taxon>Bacteria</taxon>
        <taxon>Bacillati</taxon>
        <taxon>Cyanobacteriota</taxon>
        <taxon>Cyanophyceae</taxon>
        <taxon>Synechococcales</taxon>
        <taxon>Prochlorococcaceae</taxon>
        <taxon>Parasynechococcus</taxon>
        <taxon>Parasynechococcus marenigrum</taxon>
    </lineage>
</organism>
<keyword id="KW-0067">ATP-binding</keyword>
<keyword id="KW-0460">Magnesium</keyword>
<keyword id="KW-0547">Nucleotide-binding</keyword>
<keyword id="KW-0808">Transferase</keyword>
<keyword id="KW-0819">tRNA processing</keyword>
<name>MIAA_PARMW</name>
<proteinExistence type="inferred from homology"/>
<feature type="chain" id="PRO_0000163995" description="tRNA dimethylallyltransferase">
    <location>
        <begin position="1"/>
        <end position="299"/>
    </location>
</feature>
<feature type="region of interest" description="Interaction with substrate tRNA" evidence="1">
    <location>
        <begin position="38"/>
        <end position="41"/>
    </location>
</feature>
<feature type="binding site" evidence="1">
    <location>
        <begin position="13"/>
        <end position="20"/>
    </location>
    <ligand>
        <name>ATP</name>
        <dbReference type="ChEBI" id="CHEBI:30616"/>
    </ligand>
</feature>
<feature type="binding site" evidence="1">
    <location>
        <begin position="15"/>
        <end position="20"/>
    </location>
    <ligand>
        <name>substrate</name>
    </ligand>
</feature>
<feature type="site" description="Interaction with substrate tRNA" evidence="1">
    <location>
        <position position="104"/>
    </location>
</feature>
<reference key="1">
    <citation type="journal article" date="2003" name="Nature">
        <title>The genome of a motile marine Synechococcus.</title>
        <authorList>
            <person name="Palenik B."/>
            <person name="Brahamsha B."/>
            <person name="Larimer F.W."/>
            <person name="Land M.L."/>
            <person name="Hauser L."/>
            <person name="Chain P."/>
            <person name="Lamerdin J.E."/>
            <person name="Regala W."/>
            <person name="Allen E.E."/>
            <person name="McCarren J."/>
            <person name="Paulsen I.T."/>
            <person name="Dufresne A."/>
            <person name="Partensky F."/>
            <person name="Webb E.A."/>
            <person name="Waterbury J."/>
        </authorList>
    </citation>
    <scope>NUCLEOTIDE SEQUENCE [LARGE SCALE GENOMIC DNA]</scope>
    <source>
        <strain>WH8102</strain>
    </source>
</reference>
<dbReference type="EC" id="2.5.1.75" evidence="1"/>
<dbReference type="EMBL" id="BX569689">
    <property type="protein sequence ID" value="CAE06609.1"/>
    <property type="molecule type" value="Genomic_DNA"/>
</dbReference>
<dbReference type="RefSeq" id="WP_011126972.1">
    <property type="nucleotide sequence ID" value="NC_005070.1"/>
</dbReference>
<dbReference type="SMR" id="Q7TTX9"/>
<dbReference type="STRING" id="84588.SYNW0094"/>
<dbReference type="KEGG" id="syw:SYNW0094"/>
<dbReference type="eggNOG" id="COG0324">
    <property type="taxonomic scope" value="Bacteria"/>
</dbReference>
<dbReference type="HOGENOM" id="CLU_032616_0_1_3"/>
<dbReference type="Proteomes" id="UP000001422">
    <property type="component" value="Chromosome"/>
</dbReference>
<dbReference type="GO" id="GO:0005524">
    <property type="term" value="F:ATP binding"/>
    <property type="evidence" value="ECO:0007669"/>
    <property type="project" value="UniProtKB-UniRule"/>
</dbReference>
<dbReference type="GO" id="GO:0052381">
    <property type="term" value="F:tRNA dimethylallyltransferase activity"/>
    <property type="evidence" value="ECO:0007669"/>
    <property type="project" value="UniProtKB-UniRule"/>
</dbReference>
<dbReference type="GO" id="GO:0006400">
    <property type="term" value="P:tRNA modification"/>
    <property type="evidence" value="ECO:0007669"/>
    <property type="project" value="TreeGrafter"/>
</dbReference>
<dbReference type="Gene3D" id="1.10.20.140">
    <property type="match status" value="1"/>
</dbReference>
<dbReference type="Gene3D" id="3.40.50.300">
    <property type="entry name" value="P-loop containing nucleotide triphosphate hydrolases"/>
    <property type="match status" value="1"/>
</dbReference>
<dbReference type="HAMAP" id="MF_00185">
    <property type="entry name" value="IPP_trans"/>
    <property type="match status" value="1"/>
</dbReference>
<dbReference type="InterPro" id="IPR039657">
    <property type="entry name" value="Dimethylallyltransferase"/>
</dbReference>
<dbReference type="InterPro" id="IPR018022">
    <property type="entry name" value="IPT"/>
</dbReference>
<dbReference type="InterPro" id="IPR027417">
    <property type="entry name" value="P-loop_NTPase"/>
</dbReference>
<dbReference type="NCBIfam" id="TIGR00174">
    <property type="entry name" value="miaA"/>
    <property type="match status" value="1"/>
</dbReference>
<dbReference type="PANTHER" id="PTHR11088">
    <property type="entry name" value="TRNA DIMETHYLALLYLTRANSFERASE"/>
    <property type="match status" value="1"/>
</dbReference>
<dbReference type="PANTHER" id="PTHR11088:SF60">
    <property type="entry name" value="TRNA DIMETHYLALLYLTRANSFERASE"/>
    <property type="match status" value="1"/>
</dbReference>
<dbReference type="Pfam" id="PF01715">
    <property type="entry name" value="IPPT"/>
    <property type="match status" value="1"/>
</dbReference>
<dbReference type="SUPFAM" id="SSF52540">
    <property type="entry name" value="P-loop containing nucleoside triphosphate hydrolases"/>
    <property type="match status" value="2"/>
</dbReference>
<comment type="function">
    <text evidence="1">Catalyzes the transfer of a dimethylallyl group onto the adenine at position 37 in tRNAs that read codons beginning with uridine, leading to the formation of N6-(dimethylallyl)adenosine (i(6)A).</text>
</comment>
<comment type="catalytic activity">
    <reaction evidence="1">
        <text>adenosine(37) in tRNA + dimethylallyl diphosphate = N(6)-dimethylallyladenosine(37) in tRNA + diphosphate</text>
        <dbReference type="Rhea" id="RHEA:26482"/>
        <dbReference type="Rhea" id="RHEA-COMP:10162"/>
        <dbReference type="Rhea" id="RHEA-COMP:10375"/>
        <dbReference type="ChEBI" id="CHEBI:33019"/>
        <dbReference type="ChEBI" id="CHEBI:57623"/>
        <dbReference type="ChEBI" id="CHEBI:74411"/>
        <dbReference type="ChEBI" id="CHEBI:74415"/>
        <dbReference type="EC" id="2.5.1.75"/>
    </reaction>
</comment>
<comment type="cofactor">
    <cofactor evidence="1">
        <name>Mg(2+)</name>
        <dbReference type="ChEBI" id="CHEBI:18420"/>
    </cofactor>
</comment>
<comment type="subunit">
    <text evidence="1">Monomer.</text>
</comment>
<comment type="similarity">
    <text evidence="1">Belongs to the IPP transferase family.</text>
</comment>
<accession>Q7TTX9</accession>
<evidence type="ECO:0000255" key="1">
    <source>
        <dbReference type="HAMAP-Rule" id="MF_00185"/>
    </source>
</evidence>